<comment type="function">
    <text evidence="10">Transmembrane tyrosine-protein kinase that may modulate TEK/TIE2 activity and contribute to the regulation of angiogenesis.</text>
</comment>
<comment type="catalytic activity">
    <reaction evidence="6">
        <text>L-tyrosyl-[protein] + ATP = O-phospho-L-tyrosyl-[protein] + ADP + H(+)</text>
        <dbReference type="Rhea" id="RHEA:10596"/>
        <dbReference type="Rhea" id="RHEA-COMP:10136"/>
        <dbReference type="Rhea" id="RHEA-COMP:20101"/>
        <dbReference type="ChEBI" id="CHEBI:15378"/>
        <dbReference type="ChEBI" id="CHEBI:30616"/>
        <dbReference type="ChEBI" id="CHEBI:46858"/>
        <dbReference type="ChEBI" id="CHEBI:61978"/>
        <dbReference type="ChEBI" id="CHEBI:456216"/>
        <dbReference type="EC" id="2.7.10.1"/>
    </reaction>
</comment>
<comment type="subunit">
    <text evidence="10 12">Heterodimer with TEK/TIE2 (PubMed:20227369). Interacts with SVEP1 (via C-terminus) (PubMed:37097004).</text>
</comment>
<comment type="interaction">
    <interactant intactId="EBI-2256865">
        <id>P35590</id>
    </interactant>
    <interactant intactId="EBI-10171697">
        <id>Q6A162</id>
        <label>KRT40</label>
    </interactant>
    <organismsDiffer>false</organismsDiffer>
    <experiments>3</experiments>
</comment>
<comment type="interaction">
    <interactant intactId="EBI-2256865">
        <id>P35590</id>
    </interactant>
    <interactant intactId="EBI-10171774">
        <id>P60410</id>
        <label>KRTAP10-8</label>
    </interactant>
    <organismsDiffer>false</organismsDiffer>
    <experiments>3</experiments>
</comment>
<comment type="interaction">
    <interactant intactId="EBI-2256865">
        <id>P35590</id>
    </interactant>
    <interactant intactId="EBI-4314891">
        <id>Q15238</id>
        <label>PSG5</label>
    </interactant>
    <organismsDiffer>false</organismsDiffer>
    <experiments>3</experiments>
</comment>
<comment type="interaction">
    <interactant intactId="EBI-2256865">
        <id>P35590</id>
    </interactant>
    <interactant intactId="EBI-740322">
        <id>Q93062</id>
        <label>RBPMS</label>
    </interactant>
    <organismsDiffer>false</organismsDiffer>
    <experiments>3</experiments>
</comment>
<comment type="interaction">
    <interactant intactId="EBI-2256865">
        <id>P35590</id>
    </interactant>
    <interactant intactId="EBI-742327">
        <id>Q15654</id>
        <label>TRIP6</label>
    </interactant>
    <organismsDiffer>false</organismsDiffer>
    <experiments>3</experiments>
</comment>
<comment type="interaction">
    <interactant intactId="EBI-2256865">
        <id>P35590</id>
    </interactant>
    <interactant intactId="EBI-527853">
        <id>Q9UGI0</id>
        <label>ZRANB1</label>
    </interactant>
    <organismsDiffer>false</organismsDiffer>
    <experiments>3</experiments>
</comment>
<comment type="subcellular location">
    <subcellularLocation>
        <location evidence="8 10">Cell membrane</location>
        <topology evidence="8 10">Single-pass type I membrane protein</topology>
    </subcellularLocation>
</comment>
<comment type="alternative products">
    <event type="alternative splicing"/>
    <isoform>
        <id>P35590-1</id>
        <name>1</name>
        <sequence type="displayed"/>
    </isoform>
    <isoform>
        <id>P35590-2</id>
        <name>2</name>
        <sequence type="described" ref="VSP_047609 VSP_047610"/>
    </isoform>
    <isoform>
        <id>P35590-3</id>
        <name>3</name>
        <sequence type="described" ref="VSP_047607 VSP_047608"/>
    </isoform>
</comment>
<comment type="tissue specificity">
    <text evidence="10">Specifically expressed in developing vascular endothelial cells.</text>
</comment>
<comment type="PTM">
    <text evidence="8">Phosphorylated on tyrosine residues in response to ANGPT1, most likely by TEK/TIE2.</text>
</comment>
<comment type="disease" evidence="11">
    <disease id="DI-06136">
        <name>Lymphatic malformation 11</name>
        <acronym>LMPHM11</acronym>
        <description>A form of primary lymphedema, a disease characterized by swelling of body parts due to developmental anomalies and functional defects of the lymphatic system. Patients with lymphedema may suffer from recurrent local infections. LMPHM11 is an autosomal dominant form characterized by onset of lower extremity edema in the second or third decade of life. Some affected individuals may have subclinical lymphatic malformations.</description>
        <dbReference type="MIM" id="619401"/>
    </disease>
    <text>The disease may be caused by variants affecting the gene represented in this entry.</text>
</comment>
<comment type="similarity">
    <text evidence="4">Belongs to the protein kinase superfamily. Tyr protein kinase family. Tie subfamily.</text>
</comment>
<comment type="online information" name="Atlas of Genetics and Cytogenetics in Oncology and Haematology">
    <link uri="https://atlasgeneticsoncology.org/gene/42560/TIE1"/>
</comment>
<organism>
    <name type="scientific">Homo sapiens</name>
    <name type="common">Human</name>
    <dbReference type="NCBI Taxonomy" id="9606"/>
    <lineage>
        <taxon>Eukaryota</taxon>
        <taxon>Metazoa</taxon>
        <taxon>Chordata</taxon>
        <taxon>Craniata</taxon>
        <taxon>Vertebrata</taxon>
        <taxon>Euteleostomi</taxon>
        <taxon>Mammalia</taxon>
        <taxon>Eutheria</taxon>
        <taxon>Euarchontoglires</taxon>
        <taxon>Primates</taxon>
        <taxon>Haplorrhini</taxon>
        <taxon>Catarrhini</taxon>
        <taxon>Hominidae</taxon>
        <taxon>Homo</taxon>
    </lineage>
</organism>
<protein>
    <recommendedName>
        <fullName>Tyrosine-protein kinase receptor Tie-1</fullName>
        <ecNumber>2.7.10.1</ecNumber>
    </recommendedName>
</protein>
<keyword id="KW-0002">3D-structure</keyword>
<keyword id="KW-0025">Alternative splicing</keyword>
<keyword id="KW-0037">Angiogenesis</keyword>
<keyword id="KW-0067">ATP-binding</keyword>
<keyword id="KW-1003">Cell membrane</keyword>
<keyword id="KW-0903">Direct protein sequencing</keyword>
<keyword id="KW-1015">Disulfide bond</keyword>
<keyword id="KW-0245">EGF-like domain</keyword>
<keyword id="KW-0325">Glycoprotein</keyword>
<keyword id="KW-0393">Immunoglobulin domain</keyword>
<keyword id="KW-0418">Kinase</keyword>
<keyword id="KW-0472">Membrane</keyword>
<keyword id="KW-0547">Nucleotide-binding</keyword>
<keyword id="KW-0597">Phosphoprotein</keyword>
<keyword id="KW-1267">Proteomics identification</keyword>
<keyword id="KW-0675">Receptor</keyword>
<keyword id="KW-1185">Reference proteome</keyword>
<keyword id="KW-0677">Repeat</keyword>
<keyword id="KW-0732">Signal</keyword>
<keyword id="KW-0808">Transferase</keyword>
<keyword id="KW-0812">Transmembrane</keyword>
<keyword id="KW-1133">Transmembrane helix</keyword>
<keyword id="KW-0829">Tyrosine-protein kinase</keyword>
<accession>P35590</accession>
<accession>B5A949</accession>
<accession>B5A950</accession>
<name>TIE1_HUMAN</name>
<reference key="1">
    <citation type="journal article" date="1992" name="Mol. Cell. Biol.">
        <title>A novel endothelial cell surface receptor tyrosine kinase with extracellular epidermal growth factor homology domains.</title>
        <authorList>
            <person name="Partanen J."/>
            <person name="Armstrong E."/>
            <person name="Maekelae T.P."/>
            <person name="Korhonen J."/>
            <person name="Sandberg M."/>
            <person name="Renkonen R."/>
            <person name="Knuutila S."/>
            <person name="Huebner K."/>
            <person name="Alitalo K."/>
        </authorList>
    </citation>
    <scope>NUCLEOTIDE SEQUENCE [MRNA] (ISOFORM 1)</scope>
</reference>
<reference key="2">
    <citation type="submission" date="1993-07" db="EMBL/GenBank/DDBJ databases">
        <authorList>
            <person name="Partanen J.M."/>
        </authorList>
    </citation>
    <scope>SEQUENCE REVISION</scope>
</reference>
<reference key="3">
    <citation type="journal article" date="2008" name="Arthritis Res. Ther.">
        <title>Novel splice variants derived from the receptor tyrosine kinase superfamily are potential therapeutics for rheumatoid arthritis.</title>
        <authorList>
            <person name="Jin P."/>
            <person name="Zhang J."/>
            <person name="Sumariwalla P.F."/>
            <person name="Ni I."/>
            <person name="Jorgensen B."/>
            <person name="Crawford D."/>
            <person name="Phillips S."/>
            <person name="Feldmann M."/>
            <person name="Shepard H.M."/>
            <person name="Paleolog E.M."/>
        </authorList>
    </citation>
    <scope>NUCLEOTIDE SEQUENCE [MRNA] (ISOFORMS 2 AND 3)</scope>
    <scope>ALTERNATIVE SPLICING</scope>
</reference>
<reference key="4">
    <citation type="journal article" date="2006" name="Nature">
        <title>The DNA sequence and biological annotation of human chromosome 1.</title>
        <authorList>
            <person name="Gregory S.G."/>
            <person name="Barlow K.F."/>
            <person name="McLay K.E."/>
            <person name="Kaul R."/>
            <person name="Swarbreck D."/>
            <person name="Dunham A."/>
            <person name="Scott C.E."/>
            <person name="Howe K.L."/>
            <person name="Woodfine K."/>
            <person name="Spencer C.C.A."/>
            <person name="Jones M.C."/>
            <person name="Gillson C."/>
            <person name="Searle S."/>
            <person name="Zhou Y."/>
            <person name="Kokocinski F."/>
            <person name="McDonald L."/>
            <person name="Evans R."/>
            <person name="Phillips K."/>
            <person name="Atkinson A."/>
            <person name="Cooper R."/>
            <person name="Jones C."/>
            <person name="Hall R.E."/>
            <person name="Andrews T.D."/>
            <person name="Lloyd C."/>
            <person name="Ainscough R."/>
            <person name="Almeida J.P."/>
            <person name="Ambrose K.D."/>
            <person name="Anderson F."/>
            <person name="Andrew R.W."/>
            <person name="Ashwell R.I.S."/>
            <person name="Aubin K."/>
            <person name="Babbage A.K."/>
            <person name="Bagguley C.L."/>
            <person name="Bailey J."/>
            <person name="Beasley H."/>
            <person name="Bethel G."/>
            <person name="Bird C.P."/>
            <person name="Bray-Allen S."/>
            <person name="Brown J.Y."/>
            <person name="Brown A.J."/>
            <person name="Buckley D."/>
            <person name="Burton J."/>
            <person name="Bye J."/>
            <person name="Carder C."/>
            <person name="Chapman J.C."/>
            <person name="Clark S.Y."/>
            <person name="Clarke G."/>
            <person name="Clee C."/>
            <person name="Cobley V."/>
            <person name="Collier R.E."/>
            <person name="Corby N."/>
            <person name="Coville G.J."/>
            <person name="Davies J."/>
            <person name="Deadman R."/>
            <person name="Dunn M."/>
            <person name="Earthrowl M."/>
            <person name="Ellington A.G."/>
            <person name="Errington H."/>
            <person name="Frankish A."/>
            <person name="Frankland J."/>
            <person name="French L."/>
            <person name="Garner P."/>
            <person name="Garnett J."/>
            <person name="Gay L."/>
            <person name="Ghori M.R.J."/>
            <person name="Gibson R."/>
            <person name="Gilby L.M."/>
            <person name="Gillett W."/>
            <person name="Glithero R.J."/>
            <person name="Grafham D.V."/>
            <person name="Griffiths C."/>
            <person name="Griffiths-Jones S."/>
            <person name="Grocock R."/>
            <person name="Hammond S."/>
            <person name="Harrison E.S.I."/>
            <person name="Hart E."/>
            <person name="Haugen E."/>
            <person name="Heath P.D."/>
            <person name="Holmes S."/>
            <person name="Holt K."/>
            <person name="Howden P.J."/>
            <person name="Hunt A.R."/>
            <person name="Hunt S.E."/>
            <person name="Hunter G."/>
            <person name="Isherwood J."/>
            <person name="James R."/>
            <person name="Johnson C."/>
            <person name="Johnson D."/>
            <person name="Joy A."/>
            <person name="Kay M."/>
            <person name="Kershaw J.K."/>
            <person name="Kibukawa M."/>
            <person name="Kimberley A.M."/>
            <person name="King A."/>
            <person name="Knights A.J."/>
            <person name="Lad H."/>
            <person name="Laird G."/>
            <person name="Lawlor S."/>
            <person name="Leongamornlert D.A."/>
            <person name="Lloyd D.M."/>
            <person name="Loveland J."/>
            <person name="Lovell J."/>
            <person name="Lush M.J."/>
            <person name="Lyne R."/>
            <person name="Martin S."/>
            <person name="Mashreghi-Mohammadi M."/>
            <person name="Matthews L."/>
            <person name="Matthews N.S.W."/>
            <person name="McLaren S."/>
            <person name="Milne S."/>
            <person name="Mistry S."/>
            <person name="Moore M.J.F."/>
            <person name="Nickerson T."/>
            <person name="O'Dell C.N."/>
            <person name="Oliver K."/>
            <person name="Palmeiri A."/>
            <person name="Palmer S.A."/>
            <person name="Parker A."/>
            <person name="Patel D."/>
            <person name="Pearce A.V."/>
            <person name="Peck A.I."/>
            <person name="Pelan S."/>
            <person name="Phelps K."/>
            <person name="Phillimore B.J."/>
            <person name="Plumb R."/>
            <person name="Rajan J."/>
            <person name="Raymond C."/>
            <person name="Rouse G."/>
            <person name="Saenphimmachak C."/>
            <person name="Sehra H.K."/>
            <person name="Sheridan E."/>
            <person name="Shownkeen R."/>
            <person name="Sims S."/>
            <person name="Skuce C.D."/>
            <person name="Smith M."/>
            <person name="Steward C."/>
            <person name="Subramanian S."/>
            <person name="Sycamore N."/>
            <person name="Tracey A."/>
            <person name="Tromans A."/>
            <person name="Van Helmond Z."/>
            <person name="Wall M."/>
            <person name="Wallis J.M."/>
            <person name="White S."/>
            <person name="Whitehead S.L."/>
            <person name="Wilkinson J.E."/>
            <person name="Willey D.L."/>
            <person name="Williams H."/>
            <person name="Wilming L."/>
            <person name="Wray P.W."/>
            <person name="Wu Z."/>
            <person name="Coulson A."/>
            <person name="Vaudin M."/>
            <person name="Sulston J.E."/>
            <person name="Durbin R.M."/>
            <person name="Hubbard T."/>
            <person name="Wooster R."/>
            <person name="Dunham I."/>
            <person name="Carter N.P."/>
            <person name="McVean G."/>
            <person name="Ross M.T."/>
            <person name="Harrow J."/>
            <person name="Olson M.V."/>
            <person name="Beck S."/>
            <person name="Rogers J."/>
            <person name="Bentley D.R."/>
        </authorList>
    </citation>
    <scope>NUCLEOTIDE SEQUENCE [LARGE SCALE GENOMIC DNA]</scope>
</reference>
<reference key="5">
    <citation type="journal article" date="2004" name="Genome Res.">
        <title>The status, quality, and expansion of the NIH full-length cDNA project: the Mammalian Gene Collection (MGC).</title>
        <authorList>
            <consortium name="The MGC Project Team"/>
        </authorList>
    </citation>
    <scope>NUCLEOTIDE SEQUENCE [LARGE SCALE MRNA] (ISOFORM 1)</scope>
    <source>
        <tissue>Lung</tissue>
    </source>
</reference>
<reference key="6">
    <citation type="journal article" date="2004" name="Protein Sci.">
        <title>Signal peptide prediction based on analysis of experimentally verified cleavage sites.</title>
        <authorList>
            <person name="Zhang Z."/>
            <person name="Henzel W.J."/>
        </authorList>
    </citation>
    <scope>PROTEIN SEQUENCE OF 22-36</scope>
</reference>
<reference key="7">
    <citation type="journal article" date="2005" name="J. Cell Biol.">
        <title>Multiple angiopoietin recombinant proteins activate the Tie1 receptor tyrosine kinase and promote its interaction with Tie2.</title>
        <authorList>
            <person name="Saharinen P."/>
            <person name="Kerkela K."/>
            <person name="Ekman N."/>
            <person name="Marron M."/>
            <person name="Brindle N."/>
            <person name="Lee G.M."/>
            <person name="Augustin H."/>
            <person name="Koh G.Y."/>
            <person name="Alitalo K."/>
        </authorList>
    </citation>
    <scope>INTERACTION WITH TEK</scope>
    <scope>SUBCELLULAR LOCATION</scope>
    <scope>PHOSPHORYLATION</scope>
</reference>
<reference key="8">
    <citation type="journal article" date="2010" name="Mol. Cell">
        <title>Tie1-Tie2 interactions mediate functional differences between angiopoietin ligands.</title>
        <authorList>
            <person name="Seegar T.C."/>
            <person name="Eller B."/>
            <person name="Tzvetkova-Robev D."/>
            <person name="Kolev M.V."/>
            <person name="Henderson S.C."/>
            <person name="Nikolov D.B."/>
            <person name="Barton W.A."/>
        </authorList>
    </citation>
    <scope>FUNCTION</scope>
    <scope>INTERACTION WITH TEK</scope>
    <scope>SUBCELLULAR LOCATION</scope>
    <scope>TISSUE SPECIFICITY</scope>
</reference>
<reference key="9">
    <citation type="journal article" date="2023" name="Elife">
        <title>Svep1 is a binding ligand of Tie1 and affects specific aspects of facial lymphatic development in a Vegfc-independent manner.</title>
        <authorList>
            <person name="Hussmann M."/>
            <person name="Schulte D."/>
            <person name="Weischer S."/>
            <person name="Carlantoni C."/>
            <person name="Nakajima H."/>
            <person name="Mochizuki N."/>
            <person name="Stainier D.Y.R."/>
            <person name="Zobel T."/>
            <person name="Koch M."/>
            <person name="Schulte-Merker S."/>
        </authorList>
    </citation>
    <scope>INTERACTION WITH SVEP1</scope>
</reference>
<reference key="10">
    <citation type="journal article" date="2007" name="Nature">
        <title>Patterns of somatic mutation in human cancer genomes.</title>
        <authorList>
            <person name="Greenman C."/>
            <person name="Stephens P."/>
            <person name="Smith R."/>
            <person name="Dalgliesh G.L."/>
            <person name="Hunter C."/>
            <person name="Bignell G."/>
            <person name="Davies H."/>
            <person name="Teague J."/>
            <person name="Butler A."/>
            <person name="Stevens C."/>
            <person name="Edkins S."/>
            <person name="O'Meara S."/>
            <person name="Vastrik I."/>
            <person name="Schmidt E.E."/>
            <person name="Avis T."/>
            <person name="Barthorpe S."/>
            <person name="Bhamra G."/>
            <person name="Buck G."/>
            <person name="Choudhury B."/>
            <person name="Clements J."/>
            <person name="Cole J."/>
            <person name="Dicks E."/>
            <person name="Forbes S."/>
            <person name="Gray K."/>
            <person name="Halliday K."/>
            <person name="Harrison R."/>
            <person name="Hills K."/>
            <person name="Hinton J."/>
            <person name="Jenkinson A."/>
            <person name="Jones D."/>
            <person name="Menzies A."/>
            <person name="Mironenko T."/>
            <person name="Perry J."/>
            <person name="Raine K."/>
            <person name="Richardson D."/>
            <person name="Shepherd R."/>
            <person name="Small A."/>
            <person name="Tofts C."/>
            <person name="Varian J."/>
            <person name="Webb T."/>
            <person name="West S."/>
            <person name="Widaa S."/>
            <person name="Yates A."/>
            <person name="Cahill D.P."/>
            <person name="Louis D.N."/>
            <person name="Goldstraw P."/>
            <person name="Nicholson A.G."/>
            <person name="Brasseur F."/>
            <person name="Looijenga L."/>
            <person name="Weber B.L."/>
            <person name="Chiew Y.-E."/>
            <person name="DeFazio A."/>
            <person name="Greaves M.F."/>
            <person name="Green A.R."/>
            <person name="Campbell P."/>
            <person name="Birney E."/>
            <person name="Easton D.F."/>
            <person name="Chenevix-Trench G."/>
            <person name="Tan M.-H."/>
            <person name="Khoo S.K."/>
            <person name="Teh B.T."/>
            <person name="Yuen S.T."/>
            <person name="Leung S.Y."/>
            <person name="Wooster R."/>
            <person name="Futreal P.A."/>
            <person name="Stratton M.R."/>
        </authorList>
    </citation>
    <scope>VARIANTS [LARGE SCALE ANALYSIS] MET-448; VAL-1104 AND HIS-1109</scope>
</reference>
<reference key="11">
    <citation type="journal article" date="2020" name="Int. J. Mol. Sci.">
        <title>TIE1 as a Candidate Gene for Lymphatic Malformations with or without Lymphedema.</title>
        <authorList>
            <person name="Michelini S."/>
            <person name="Ricci M."/>
            <person name="Veselenyiova D."/>
            <person name="Kenanoglu S."/>
            <person name="Kurti D."/>
            <person name="Baglivo M."/>
            <person name="Fiorentino A."/>
            <person name="Basha S.H."/>
            <person name="Priya S."/>
            <person name="Serrani R."/>
            <person name="Krajcovic J."/>
            <person name="Dundar M."/>
            <person name="Dautaj A."/>
            <person name="Bertelli M."/>
        </authorList>
    </citation>
    <scope>VARIANTS LMPHM11 CYS-481; LYS-1061 AND HIS-1109</scope>
    <scope>INVOLVEMENT IN LMPHM11</scope>
</reference>
<evidence type="ECO:0000250" key="1"/>
<evidence type="ECO:0000255" key="2"/>
<evidence type="ECO:0000255" key="3">
    <source>
        <dbReference type="PROSITE-ProRule" id="PRU00076"/>
    </source>
</evidence>
<evidence type="ECO:0000255" key="4">
    <source>
        <dbReference type="PROSITE-ProRule" id="PRU00159"/>
    </source>
</evidence>
<evidence type="ECO:0000255" key="5">
    <source>
        <dbReference type="PROSITE-ProRule" id="PRU00316"/>
    </source>
</evidence>
<evidence type="ECO:0000255" key="6">
    <source>
        <dbReference type="PROSITE-ProRule" id="PRU10028"/>
    </source>
</evidence>
<evidence type="ECO:0000269" key="7">
    <source>
    </source>
</evidence>
<evidence type="ECO:0000269" key="8">
    <source>
    </source>
</evidence>
<evidence type="ECO:0000269" key="9">
    <source>
    </source>
</evidence>
<evidence type="ECO:0000269" key="10">
    <source>
    </source>
</evidence>
<evidence type="ECO:0000269" key="11">
    <source>
    </source>
</evidence>
<evidence type="ECO:0000269" key="12">
    <source>
    </source>
</evidence>
<evidence type="ECO:0000303" key="13">
    <source>
    </source>
</evidence>
<evidence type="ECO:0007829" key="14">
    <source>
        <dbReference type="PDB" id="5N06"/>
    </source>
</evidence>
<proteinExistence type="evidence at protein level"/>
<sequence length="1138" mass="125090">MVWRVPPFLLPILFLASHVGAAVDLTLLANLRLTDPQRFFLTCVSGEAGAGRGSDAWGPPLLLEKDDRIVRTPPGPPLRLARNGSHQVTLRGFSKPSDLVGVFSCVGGAGARRTRVIYVHNSPGAHLLPDKVTHTVNKGDTAVLSARVHKEKQTDVIWKSNGSYFYTLDWHEAQDGRFLLQLPNVQPPSSGIYSATYLEASPLGSAFFRLIVRGCGAGRWGPGCTKECPGCLHGGVCHDHDGECVCPPGFTGTRCEQACREGRFGQSCQEQCPGISGCRGLTFCLPDPYGCSCGSGWRGSQCQEACAPGHFGADCRLQCQCQNGGTCDRFSGCVCPSGWHGVHCEKSDRIPQILNMASELEFNLETMPRINCAAAGNPFPVRGSIELRKPDGTVLLSTKAIVEPEKTTAEFEVPRLVLADSGFWECRVSTSGGQDSRRFKVNVKVPPVPLAAPRLLTKQSRQLVVSPLVSFSGDGPISTVRLHYRPQDSTMDWSTIVVDPSENVTLMNLRPKTGYSVRVQLSRPGEGGEGAWGPPTLMTTDCPEPLLQPWLEGWHVEGTDRLRVSWSLPLVPGPLVGDGFLLRLWDGTRGQERRENVSSPQARTALLTGLTPGTHYQLDVQLYHCTLLGPASPPAHVLLPPSGPPAPRHLHAQALSDSEIQLTWKHPEALPGPISKYVVEVQVAGGAGDPLWIDVDRPEETSTIIRGLNASTRYLFRMRASIQGLGDWSNTVEESTLGNGLQAEGPVQESRAAEEGLDQQLILAVVGSVSATCLTILAALLTLVCIRRSCLHRRRTFTYQSGSGEETILQFSSGTLTLTRRPKLQPEPLSYPVLEWEDITFEDLIGEGNFGQVIRAMIKKDGLKMNAAIKMLKEYASENDHRDFAGELEVLCKLGHHPNIINLLGACKNRGYLYIAIEYAPYGNLLDFLRKSRVLETDPAFAREHGTASTLSSRQLLRFASDAANGMQYLSEKQFIHRDLAARNVLVGENLASKIADFGLSRGEEVYVKKTMGRLPVRWMAIESLNYSVYTTKSDVWSFGVLLWEIVSLGGTPYCGMTCAELYEKLPQGYRMEQPRNCDDEVYELMRQCWRDRPYERPPFAQIALQLGRMLEARKAYVNMSLFENFTYAGIDATAEEA</sequence>
<gene>
    <name type="primary">TIE1</name>
    <name type="synonym">TIE</name>
</gene>
<dbReference type="EC" id="2.7.10.1"/>
<dbReference type="EMBL" id="X60957">
    <property type="protein sequence ID" value="CAA43290.1"/>
    <property type="molecule type" value="mRNA"/>
</dbReference>
<dbReference type="EMBL" id="EU826587">
    <property type="protein sequence ID" value="ACF47623.1"/>
    <property type="molecule type" value="mRNA"/>
</dbReference>
<dbReference type="EMBL" id="EU826588">
    <property type="protein sequence ID" value="ACF47624.1"/>
    <property type="molecule type" value="mRNA"/>
</dbReference>
<dbReference type="EMBL" id="AC093420">
    <property type="status" value="NOT_ANNOTATED_CDS"/>
    <property type="molecule type" value="Genomic_DNA"/>
</dbReference>
<dbReference type="EMBL" id="AL139289">
    <property type="status" value="NOT_ANNOTATED_CDS"/>
    <property type="molecule type" value="Genomic_DNA"/>
</dbReference>
<dbReference type="EMBL" id="BC038239">
    <property type="protein sequence ID" value="AAH38239.1"/>
    <property type="molecule type" value="mRNA"/>
</dbReference>
<dbReference type="CCDS" id="CCDS482.1">
    <molecule id="P35590-1"/>
</dbReference>
<dbReference type="RefSeq" id="NP_005415.1">
    <molecule id="P35590-1"/>
    <property type="nucleotide sequence ID" value="NM_005424.5"/>
</dbReference>
<dbReference type="PDB" id="5N06">
    <property type="method" value="X-ray"/>
    <property type="resolution" value="2.50 A"/>
    <property type="chains" value="A/B=642-738"/>
</dbReference>
<dbReference type="PDBsum" id="5N06"/>
<dbReference type="SMR" id="P35590"/>
<dbReference type="BioGRID" id="112931">
    <property type="interactions" value="15"/>
</dbReference>
<dbReference type="CORUM" id="P35590"/>
<dbReference type="FunCoup" id="P35590">
    <property type="interactions" value="44"/>
</dbReference>
<dbReference type="IntAct" id="P35590">
    <property type="interactions" value="31"/>
</dbReference>
<dbReference type="MINT" id="P35590"/>
<dbReference type="STRING" id="9606.ENSP00000361554"/>
<dbReference type="BindingDB" id="P35590"/>
<dbReference type="ChEMBL" id="CHEMBL5274"/>
<dbReference type="DrugBank" id="DB12010">
    <property type="generic name" value="Fostamatinib"/>
</dbReference>
<dbReference type="DrugCentral" id="P35590"/>
<dbReference type="GuidetoPHARMACOLOGY" id="1841"/>
<dbReference type="GlyCosmos" id="P35590">
    <property type="glycosylation" value="5 sites, No reported glycans"/>
</dbReference>
<dbReference type="GlyGen" id="P35590">
    <property type="glycosylation" value="6 sites, 3 N-linked glycans (1 site), 1 O-linked glycan (1 site)"/>
</dbReference>
<dbReference type="iPTMnet" id="P35590"/>
<dbReference type="PhosphoSitePlus" id="P35590"/>
<dbReference type="BioMuta" id="TIE1"/>
<dbReference type="DMDM" id="549081"/>
<dbReference type="jPOST" id="P35590"/>
<dbReference type="MassIVE" id="P35590"/>
<dbReference type="PaxDb" id="9606-ENSP00000361554"/>
<dbReference type="PeptideAtlas" id="P35590"/>
<dbReference type="ProteomicsDB" id="55098">
    <molecule id="P35590-1"/>
</dbReference>
<dbReference type="ProteomicsDB" id="5928"/>
<dbReference type="ProteomicsDB" id="5929"/>
<dbReference type="Antibodypedia" id="32289">
    <property type="antibodies" value="738 antibodies from 39 providers"/>
</dbReference>
<dbReference type="DNASU" id="7075"/>
<dbReference type="Ensembl" id="ENST00000372476.8">
    <molecule id="P35590-1"/>
    <property type="protein sequence ID" value="ENSP00000361554.3"/>
    <property type="gene ID" value="ENSG00000066056.15"/>
</dbReference>
<dbReference type="GeneID" id="7075"/>
<dbReference type="KEGG" id="hsa:7075"/>
<dbReference type="MANE-Select" id="ENST00000372476.8">
    <property type="protein sequence ID" value="ENSP00000361554.3"/>
    <property type="RefSeq nucleotide sequence ID" value="NM_005424.5"/>
    <property type="RefSeq protein sequence ID" value="NP_005415.1"/>
</dbReference>
<dbReference type="UCSC" id="uc001ciu.4">
    <molecule id="P35590-1"/>
    <property type="organism name" value="human"/>
</dbReference>
<dbReference type="AGR" id="HGNC:11809"/>
<dbReference type="CTD" id="7075"/>
<dbReference type="DisGeNET" id="7075"/>
<dbReference type="GeneCards" id="TIE1"/>
<dbReference type="HGNC" id="HGNC:11809">
    <property type="gene designation" value="TIE1"/>
</dbReference>
<dbReference type="HPA" id="ENSG00000066056">
    <property type="expression patterns" value="Low tissue specificity"/>
</dbReference>
<dbReference type="MalaCards" id="TIE1"/>
<dbReference type="MIM" id="600222">
    <property type="type" value="gene"/>
</dbReference>
<dbReference type="MIM" id="619401">
    <property type="type" value="phenotype"/>
</dbReference>
<dbReference type="neXtProt" id="NX_P35590"/>
<dbReference type="OpenTargets" id="ENSG00000066056"/>
<dbReference type="PharmGKB" id="PA36516"/>
<dbReference type="VEuPathDB" id="HostDB:ENSG00000066056"/>
<dbReference type="eggNOG" id="KOG0200">
    <property type="taxonomic scope" value="Eukaryota"/>
</dbReference>
<dbReference type="GeneTree" id="ENSGT00940000157693"/>
<dbReference type="HOGENOM" id="CLU_008888_0_0_1"/>
<dbReference type="InParanoid" id="P35590"/>
<dbReference type="OMA" id="AKVWWRL"/>
<dbReference type="OrthoDB" id="1668230at2759"/>
<dbReference type="PAN-GO" id="P35590">
    <property type="GO annotations" value="7 GO annotations based on evolutionary models"/>
</dbReference>
<dbReference type="PhylomeDB" id="P35590"/>
<dbReference type="TreeFam" id="TF317568"/>
<dbReference type="BRENDA" id="2.7.10.1">
    <property type="organism ID" value="2681"/>
</dbReference>
<dbReference type="PathwayCommons" id="P35590"/>
<dbReference type="SignaLink" id="P35590"/>
<dbReference type="SIGNOR" id="P35590"/>
<dbReference type="BioGRID-ORCS" id="7075">
    <property type="hits" value="20 hits in 1182 CRISPR screens"/>
</dbReference>
<dbReference type="ChiTaRS" id="TIE1">
    <property type="organism name" value="human"/>
</dbReference>
<dbReference type="GenomeRNAi" id="7075"/>
<dbReference type="Pharos" id="P35590">
    <property type="development level" value="Tchem"/>
</dbReference>
<dbReference type="PRO" id="PR:P35590"/>
<dbReference type="Proteomes" id="UP000005640">
    <property type="component" value="Chromosome 1"/>
</dbReference>
<dbReference type="RNAct" id="P35590">
    <property type="molecule type" value="protein"/>
</dbReference>
<dbReference type="Bgee" id="ENSG00000066056">
    <property type="expression patterns" value="Expressed in omental fat pad and 148 other cell types or tissues"/>
</dbReference>
<dbReference type="GO" id="GO:0005886">
    <property type="term" value="C:plasma membrane"/>
    <property type="evidence" value="ECO:0000318"/>
    <property type="project" value="GO_Central"/>
</dbReference>
<dbReference type="GO" id="GO:0043235">
    <property type="term" value="C:receptor complex"/>
    <property type="evidence" value="ECO:0000318"/>
    <property type="project" value="GO_Central"/>
</dbReference>
<dbReference type="GO" id="GO:0005524">
    <property type="term" value="F:ATP binding"/>
    <property type="evidence" value="ECO:0007669"/>
    <property type="project" value="UniProtKB-KW"/>
</dbReference>
<dbReference type="GO" id="GO:0004714">
    <property type="term" value="F:transmembrane receptor protein tyrosine kinase activity"/>
    <property type="evidence" value="ECO:0000318"/>
    <property type="project" value="GO_Central"/>
</dbReference>
<dbReference type="GO" id="GO:0001525">
    <property type="term" value="P:angiogenesis"/>
    <property type="evidence" value="ECO:0007669"/>
    <property type="project" value="UniProtKB-KW"/>
</dbReference>
<dbReference type="GO" id="GO:0003180">
    <property type="term" value="P:aortic valve morphogenesis"/>
    <property type="evidence" value="ECO:0000250"/>
    <property type="project" value="BHF-UCL"/>
</dbReference>
<dbReference type="GO" id="GO:0060854">
    <property type="term" value="P:branching involved in lymph vessel morphogenesis"/>
    <property type="evidence" value="ECO:0000250"/>
    <property type="project" value="BHF-UCL"/>
</dbReference>
<dbReference type="GO" id="GO:0007169">
    <property type="term" value="P:cell surface receptor protein tyrosine kinase signaling pathway"/>
    <property type="evidence" value="ECO:0000318"/>
    <property type="project" value="GO_Central"/>
</dbReference>
<dbReference type="GO" id="GO:0001701">
    <property type="term" value="P:in utero embryonic development"/>
    <property type="evidence" value="ECO:0007669"/>
    <property type="project" value="Ensembl"/>
</dbReference>
<dbReference type="GO" id="GO:0060836">
    <property type="term" value="P:lymphatic endothelial cell differentiation"/>
    <property type="evidence" value="ECO:0000250"/>
    <property type="project" value="BHF-UCL"/>
</dbReference>
<dbReference type="GO" id="GO:0007498">
    <property type="term" value="P:mesoderm development"/>
    <property type="evidence" value="ECO:0000304"/>
    <property type="project" value="ProtInc"/>
</dbReference>
<dbReference type="GO" id="GO:0016525">
    <property type="term" value="P:negative regulation of angiogenesis"/>
    <property type="evidence" value="ECO:0007669"/>
    <property type="project" value="Ensembl"/>
</dbReference>
<dbReference type="GO" id="GO:0030336">
    <property type="term" value="P:negative regulation of cell migration"/>
    <property type="evidence" value="ECO:0007669"/>
    <property type="project" value="Ensembl"/>
</dbReference>
<dbReference type="GO" id="GO:0045026">
    <property type="term" value="P:plasma membrane fusion"/>
    <property type="evidence" value="ECO:0007669"/>
    <property type="project" value="Ensembl"/>
</dbReference>
<dbReference type="GO" id="GO:0045766">
    <property type="term" value="P:positive regulation of angiogenesis"/>
    <property type="evidence" value="ECO:0000318"/>
    <property type="project" value="GO_Central"/>
</dbReference>
<dbReference type="GO" id="GO:0001936">
    <property type="term" value="P:regulation of endothelial cell proliferation"/>
    <property type="evidence" value="ECO:0000250"/>
    <property type="project" value="BHF-UCL"/>
</dbReference>
<dbReference type="GO" id="GO:1901201">
    <property type="term" value="P:regulation of extracellular matrix assembly"/>
    <property type="evidence" value="ECO:0000250"/>
    <property type="project" value="BHF-UCL"/>
</dbReference>
<dbReference type="GO" id="GO:0032526">
    <property type="term" value="P:response to retinoic acid"/>
    <property type="evidence" value="ECO:0007669"/>
    <property type="project" value="Ensembl"/>
</dbReference>
<dbReference type="GO" id="GO:0007165">
    <property type="term" value="P:signal transduction"/>
    <property type="evidence" value="ECO:0000304"/>
    <property type="project" value="ProtInc"/>
</dbReference>
<dbReference type="GO" id="GO:0048771">
    <property type="term" value="P:tissue remodeling"/>
    <property type="evidence" value="ECO:0000250"/>
    <property type="project" value="BHF-UCL"/>
</dbReference>
<dbReference type="GO" id="GO:0001570">
    <property type="term" value="P:vasculogenesis"/>
    <property type="evidence" value="ECO:0007669"/>
    <property type="project" value="Ensembl"/>
</dbReference>
<dbReference type="CDD" id="cd00054">
    <property type="entry name" value="EGF_CA"/>
    <property type="match status" value="2"/>
</dbReference>
<dbReference type="CDD" id="cd00063">
    <property type="entry name" value="FN3"/>
    <property type="match status" value="3"/>
</dbReference>
<dbReference type="CDD" id="cd05089">
    <property type="entry name" value="PTKc_Tie1"/>
    <property type="match status" value="1"/>
</dbReference>
<dbReference type="FunFam" id="3.30.200.20:FF:000113">
    <property type="entry name" value="Putative tyrosine-protein kinase receptor Tie-1"/>
    <property type="match status" value="1"/>
</dbReference>
<dbReference type="FunFam" id="1.10.510.10:FF:000123">
    <property type="entry name" value="Tyrosine-protein kinase receptor Tie-1"/>
    <property type="match status" value="1"/>
</dbReference>
<dbReference type="FunFam" id="2.170.300.10:FF:000003">
    <property type="entry name" value="tyrosine-protein kinase receptor Tie-1 isoform X1"/>
    <property type="match status" value="1"/>
</dbReference>
<dbReference type="FunFam" id="2.60.40.10:FF:000591">
    <property type="entry name" value="tyrosine-protein kinase receptor Tie-1 isoform X1"/>
    <property type="match status" value="1"/>
</dbReference>
<dbReference type="FunFam" id="2.60.40.10:FF:000597">
    <property type="entry name" value="tyrosine-protein kinase receptor Tie-1 isoform X1"/>
    <property type="match status" value="1"/>
</dbReference>
<dbReference type="FunFam" id="2.60.40.10:FF:000583">
    <property type="entry name" value="tyrosine-protein kinase receptor Tie-1 isoform X2"/>
    <property type="match status" value="1"/>
</dbReference>
<dbReference type="FunFam" id="2.60.40.10:FF:000758">
    <property type="entry name" value="tyrosine-protein kinase receptor Tie-1 isoform X2"/>
    <property type="match status" value="1"/>
</dbReference>
<dbReference type="FunFam" id="2.60.40.10:FF:000911">
    <property type="entry name" value="tyrosine-protein kinase receptor Tie-1 isoform X2"/>
    <property type="match status" value="1"/>
</dbReference>
<dbReference type="Gene3D" id="2.60.40.10">
    <property type="entry name" value="Immunoglobulins"/>
    <property type="match status" value="5"/>
</dbReference>
<dbReference type="Gene3D" id="3.30.200.20">
    <property type="entry name" value="Phosphorylase Kinase, domain 1"/>
    <property type="match status" value="1"/>
</dbReference>
<dbReference type="Gene3D" id="2.170.300.10">
    <property type="entry name" value="Tie2 ligand-binding domain superfamily"/>
    <property type="match status" value="1"/>
</dbReference>
<dbReference type="Gene3D" id="1.10.510.10">
    <property type="entry name" value="Transferase(Phosphotransferase) domain 1"/>
    <property type="match status" value="1"/>
</dbReference>
<dbReference type="InterPro" id="IPR000742">
    <property type="entry name" value="EGF-like_dom"/>
</dbReference>
<dbReference type="InterPro" id="IPR003961">
    <property type="entry name" value="FN3_dom"/>
</dbReference>
<dbReference type="InterPro" id="IPR036116">
    <property type="entry name" value="FN3_sf"/>
</dbReference>
<dbReference type="InterPro" id="IPR036179">
    <property type="entry name" value="Ig-like_dom_sf"/>
</dbReference>
<dbReference type="InterPro" id="IPR013783">
    <property type="entry name" value="Ig-like_fold"/>
</dbReference>
<dbReference type="InterPro" id="IPR003599">
    <property type="entry name" value="Ig_sub"/>
</dbReference>
<dbReference type="InterPro" id="IPR013151">
    <property type="entry name" value="Immunoglobulin_dom"/>
</dbReference>
<dbReference type="InterPro" id="IPR011009">
    <property type="entry name" value="Kinase-like_dom_sf"/>
</dbReference>
<dbReference type="InterPro" id="IPR000719">
    <property type="entry name" value="Prot_kinase_dom"/>
</dbReference>
<dbReference type="InterPro" id="IPR017441">
    <property type="entry name" value="Protein_kinase_ATP_BS"/>
</dbReference>
<dbReference type="InterPro" id="IPR050122">
    <property type="entry name" value="RTK"/>
</dbReference>
<dbReference type="InterPro" id="IPR001245">
    <property type="entry name" value="Ser-Thr/Tyr_kinase_cat_dom"/>
</dbReference>
<dbReference type="InterPro" id="IPR008266">
    <property type="entry name" value="Tyr_kinase_AS"/>
</dbReference>
<dbReference type="InterPro" id="IPR020635">
    <property type="entry name" value="Tyr_kinase_cat_dom"/>
</dbReference>
<dbReference type="PANTHER" id="PTHR24416">
    <property type="entry name" value="TYROSINE-PROTEIN KINASE RECEPTOR"/>
    <property type="match status" value="1"/>
</dbReference>
<dbReference type="PANTHER" id="PTHR24416:SF341">
    <property type="entry name" value="TYROSINE-PROTEIN KINASE RECEPTOR TIE-1"/>
    <property type="match status" value="1"/>
</dbReference>
<dbReference type="Pfam" id="PF00041">
    <property type="entry name" value="fn3"/>
    <property type="match status" value="3"/>
</dbReference>
<dbReference type="Pfam" id="PF00047">
    <property type="entry name" value="ig"/>
    <property type="match status" value="2"/>
</dbReference>
<dbReference type="Pfam" id="PF07714">
    <property type="entry name" value="PK_Tyr_Ser-Thr"/>
    <property type="match status" value="1"/>
</dbReference>
<dbReference type="PRINTS" id="PR00109">
    <property type="entry name" value="TYRKINASE"/>
</dbReference>
<dbReference type="SMART" id="SM00181">
    <property type="entry name" value="EGF"/>
    <property type="match status" value="3"/>
</dbReference>
<dbReference type="SMART" id="SM00060">
    <property type="entry name" value="FN3"/>
    <property type="match status" value="3"/>
</dbReference>
<dbReference type="SMART" id="SM00409">
    <property type="entry name" value="IG"/>
    <property type="match status" value="2"/>
</dbReference>
<dbReference type="SMART" id="SM00219">
    <property type="entry name" value="TyrKc"/>
    <property type="match status" value="1"/>
</dbReference>
<dbReference type="SUPFAM" id="SSF49265">
    <property type="entry name" value="Fibronectin type III"/>
    <property type="match status" value="2"/>
</dbReference>
<dbReference type="SUPFAM" id="SSF48726">
    <property type="entry name" value="Immunoglobulin"/>
    <property type="match status" value="2"/>
</dbReference>
<dbReference type="SUPFAM" id="SSF56112">
    <property type="entry name" value="Protein kinase-like (PK-like)"/>
    <property type="match status" value="1"/>
</dbReference>
<dbReference type="PROSITE" id="PS00022">
    <property type="entry name" value="EGF_1"/>
    <property type="match status" value="3"/>
</dbReference>
<dbReference type="PROSITE" id="PS01186">
    <property type="entry name" value="EGF_2"/>
    <property type="match status" value="3"/>
</dbReference>
<dbReference type="PROSITE" id="PS50026">
    <property type="entry name" value="EGF_3"/>
    <property type="match status" value="2"/>
</dbReference>
<dbReference type="PROSITE" id="PS50853">
    <property type="entry name" value="FN3"/>
    <property type="match status" value="3"/>
</dbReference>
<dbReference type="PROSITE" id="PS00107">
    <property type="entry name" value="PROTEIN_KINASE_ATP"/>
    <property type="match status" value="1"/>
</dbReference>
<dbReference type="PROSITE" id="PS50011">
    <property type="entry name" value="PROTEIN_KINASE_DOM"/>
    <property type="match status" value="1"/>
</dbReference>
<dbReference type="PROSITE" id="PS00109">
    <property type="entry name" value="PROTEIN_KINASE_TYR"/>
    <property type="match status" value="1"/>
</dbReference>
<feature type="signal peptide" evidence="7">
    <location>
        <begin position="1"/>
        <end position="21"/>
    </location>
</feature>
<feature type="chain" id="PRO_0000024471" description="Tyrosine-protein kinase receptor Tie-1">
    <location>
        <begin position="22"/>
        <end position="1138"/>
    </location>
</feature>
<feature type="topological domain" description="Extracellular" evidence="2">
    <location>
        <begin position="22"/>
        <end position="759"/>
    </location>
</feature>
<feature type="transmembrane region" description="Helical" evidence="2">
    <location>
        <begin position="760"/>
        <end position="784"/>
    </location>
</feature>
<feature type="topological domain" description="Cytoplasmic" evidence="2">
    <location>
        <begin position="785"/>
        <end position="1138"/>
    </location>
</feature>
<feature type="domain" description="Ig-like C2-type 1">
    <location>
        <begin position="43"/>
        <end position="105"/>
    </location>
</feature>
<feature type="domain" description="EGF-like 1" evidence="3">
    <location>
        <begin position="214"/>
        <end position="256"/>
    </location>
</feature>
<feature type="domain" description="EGF-like 2" evidence="3">
    <location>
        <begin position="258"/>
        <end position="303"/>
    </location>
</feature>
<feature type="domain" description="EGF-like 3" evidence="3">
    <location>
        <begin position="305"/>
        <end position="345"/>
    </location>
</feature>
<feature type="domain" description="Ig-like C2-type 2">
    <location>
        <begin position="372"/>
        <end position="426"/>
    </location>
</feature>
<feature type="domain" description="Fibronectin type-III 1" evidence="5">
    <location>
        <begin position="446"/>
        <end position="545"/>
    </location>
</feature>
<feature type="domain" description="Fibronectin type-III 2" evidence="5">
    <location>
        <begin position="548"/>
        <end position="642"/>
    </location>
</feature>
<feature type="domain" description="Fibronectin type-III 3" evidence="5">
    <location>
        <begin position="646"/>
        <end position="739"/>
    </location>
</feature>
<feature type="domain" description="Protein kinase" evidence="4">
    <location>
        <begin position="839"/>
        <end position="1118"/>
    </location>
</feature>
<feature type="active site" description="Proton acceptor" evidence="4 6">
    <location>
        <position position="979"/>
    </location>
</feature>
<feature type="binding site" evidence="4">
    <location>
        <begin position="845"/>
        <end position="853"/>
    </location>
    <ligand>
        <name>ATP</name>
        <dbReference type="ChEBI" id="CHEBI:30616"/>
    </ligand>
</feature>
<feature type="binding site" evidence="4">
    <location>
        <position position="870"/>
    </location>
    <ligand>
        <name>ATP</name>
        <dbReference type="ChEBI" id="CHEBI:30616"/>
    </ligand>
</feature>
<feature type="modified residue" description="Phosphotyrosine; by autocatalysis" evidence="1">
    <location>
        <position position="1007"/>
    </location>
</feature>
<feature type="glycosylation site" description="N-linked (GlcNAc...) asparagine" evidence="2">
    <location>
        <position position="83"/>
    </location>
</feature>
<feature type="glycosylation site" description="N-linked (GlcNAc...) asparagine" evidence="2">
    <location>
        <position position="161"/>
    </location>
</feature>
<feature type="glycosylation site" description="N-linked (GlcNAc...) asparagine" evidence="2">
    <location>
        <position position="503"/>
    </location>
</feature>
<feature type="glycosylation site" description="N-linked (GlcNAc...) asparagine" evidence="2">
    <location>
        <position position="596"/>
    </location>
</feature>
<feature type="glycosylation site" description="N-linked (GlcNAc...) asparagine" evidence="2">
    <location>
        <position position="709"/>
    </location>
</feature>
<feature type="disulfide bond" evidence="3">
    <location>
        <begin position="228"/>
        <end position="237"/>
    </location>
</feature>
<feature type="disulfide bond" evidence="3">
    <location>
        <begin position="231"/>
        <end position="244"/>
    </location>
</feature>
<feature type="disulfide bond" evidence="3">
    <location>
        <begin position="246"/>
        <end position="255"/>
    </location>
</feature>
<feature type="disulfide bond" evidence="3">
    <location>
        <begin position="315"/>
        <end position="327"/>
    </location>
</feature>
<feature type="disulfide bond" evidence="3">
    <location>
        <begin position="321"/>
        <end position="333"/>
    </location>
</feature>
<feature type="disulfide bond" evidence="3">
    <location>
        <begin position="335"/>
        <end position="344"/>
    </location>
</feature>
<feature type="splice variant" id="VSP_047607" description="In isoform 3." evidence="13">
    <original>ACAPGHFGADCRL</original>
    <variation>VHQGHCGAREDHS</variation>
    <location>
        <begin position="305"/>
        <end position="317"/>
    </location>
</feature>
<feature type="splice variant" id="VSP_047608" description="In isoform 3." evidence="13">
    <location>
        <begin position="318"/>
        <end position="1138"/>
    </location>
</feature>
<feature type="splice variant" id="VSP_047609" description="In isoform 2." evidence="13">
    <original>DRIPQILNMASELEFNLETMPRINCAAAGNPF</original>
    <variation>GWRDWVDTSTEKQNTDEGRFGGHVSAPVGAPG</variation>
    <location>
        <begin position="348"/>
        <end position="379"/>
    </location>
</feature>
<feature type="splice variant" id="VSP_047610" description="In isoform 2." evidence="13">
    <location>
        <begin position="380"/>
        <end position="1138"/>
    </location>
</feature>
<feature type="sequence variant" id="VAR_041852" description="In dbSNP:rs56302794." evidence="9">
    <original>V</original>
    <variation>M</variation>
    <location>
        <position position="448"/>
    </location>
</feature>
<feature type="sequence variant" id="VAR_085888" description="In LMPHM11; uncertain significance; dbSNP:rs139244400." evidence="11">
    <original>R</original>
    <variation>C</variation>
    <location>
        <position position="481"/>
    </location>
</feature>
<feature type="sequence variant" id="VAR_085889" description="In LMPHM11; uncertain significance; dbSNP:rs760492428." evidence="11">
    <original>E</original>
    <variation>K</variation>
    <location>
        <position position="1061"/>
    </location>
</feature>
<feature type="sequence variant" id="VAR_041853" description="In dbSNP:rs35573981." evidence="9">
    <original>A</original>
    <variation>V</variation>
    <location>
        <position position="1104"/>
    </location>
</feature>
<feature type="sequence variant" id="VAR_041854" description="In LMPHM11; uncertain significance; dbSNP:rs34993202." evidence="9 11">
    <original>R</original>
    <variation>H</variation>
    <location>
        <position position="1109"/>
    </location>
</feature>
<feature type="strand" evidence="14">
    <location>
        <begin position="648"/>
        <end position="656"/>
    </location>
</feature>
<feature type="strand" evidence="14">
    <location>
        <begin position="659"/>
        <end position="665"/>
    </location>
</feature>
<feature type="strand" evidence="14">
    <location>
        <begin position="676"/>
        <end position="682"/>
    </location>
</feature>
<feature type="strand" evidence="14">
    <location>
        <begin position="691"/>
        <end position="695"/>
    </location>
</feature>
<feature type="strand" evidence="14">
    <location>
        <begin position="701"/>
        <end position="707"/>
    </location>
</feature>
<feature type="strand" evidence="14">
    <location>
        <begin position="714"/>
        <end position="728"/>
    </location>
</feature>